<organism>
    <name type="scientific">Staphylococcus aureus (strain N315)</name>
    <dbReference type="NCBI Taxonomy" id="158879"/>
    <lineage>
        <taxon>Bacteria</taxon>
        <taxon>Bacillati</taxon>
        <taxon>Bacillota</taxon>
        <taxon>Bacilli</taxon>
        <taxon>Bacillales</taxon>
        <taxon>Staphylococcaceae</taxon>
        <taxon>Staphylococcus</taxon>
    </lineage>
</organism>
<name>TSAD_STAAN</name>
<keyword id="KW-0012">Acyltransferase</keyword>
<keyword id="KW-0963">Cytoplasm</keyword>
<keyword id="KW-0408">Iron</keyword>
<keyword id="KW-0479">Metal-binding</keyword>
<keyword id="KW-0808">Transferase</keyword>
<keyword id="KW-0819">tRNA processing</keyword>
<sequence>MTKDILILAVETSCDETSVSVIKNGRDILSNTVLSQIESHKRFGGVVPEVASRHHVEGITTTINEALVDADVSMEDIDAIAVTEGPGLIGALLIGVNAAKALAFAYDKPLIPVHHIAGHIYANHIEEPLTFPLIALIVSGGHTELVYMKDHLSFEVIGETRDDAVGEAYDKVARTIGLNYPGGPQVDRLAAEGEDTYSFPRVWLDKDSYDFSFSGLKSAVINQLHNQRQKNIPIIEANVATSFQNSVVEVLTFKAIQACKEYSVQRLIVAGGVASNKGLRQSLADQCKVNDIQLTIPSPKLCTDNAAMIGVAGHSLYQQGRFADLALNGHSNIDLEEYSAE</sequence>
<dbReference type="EC" id="2.3.1.234" evidence="1"/>
<dbReference type="EMBL" id="BA000018">
    <property type="protein sequence ID" value="BAB43136.1"/>
    <property type="molecule type" value="Genomic_DNA"/>
</dbReference>
<dbReference type="PIR" id="G89996">
    <property type="entry name" value="G89996"/>
</dbReference>
<dbReference type="RefSeq" id="WP_000159041.1">
    <property type="nucleotide sequence ID" value="NC_002745.2"/>
</dbReference>
<dbReference type="SMR" id="Q7A4H8"/>
<dbReference type="EnsemblBacteria" id="BAB43136">
    <property type="protein sequence ID" value="BAB43136"/>
    <property type="gene ID" value="BAB43136"/>
</dbReference>
<dbReference type="KEGG" id="sau:SA1854"/>
<dbReference type="HOGENOM" id="CLU_023208_0_2_9"/>
<dbReference type="GO" id="GO:0005737">
    <property type="term" value="C:cytoplasm"/>
    <property type="evidence" value="ECO:0007669"/>
    <property type="project" value="UniProtKB-SubCell"/>
</dbReference>
<dbReference type="GO" id="GO:0005506">
    <property type="term" value="F:iron ion binding"/>
    <property type="evidence" value="ECO:0007669"/>
    <property type="project" value="UniProtKB-UniRule"/>
</dbReference>
<dbReference type="GO" id="GO:0061711">
    <property type="term" value="F:N(6)-L-threonylcarbamoyladenine synthase activity"/>
    <property type="evidence" value="ECO:0007669"/>
    <property type="project" value="UniProtKB-EC"/>
</dbReference>
<dbReference type="GO" id="GO:0002949">
    <property type="term" value="P:tRNA threonylcarbamoyladenosine modification"/>
    <property type="evidence" value="ECO:0007669"/>
    <property type="project" value="UniProtKB-UniRule"/>
</dbReference>
<dbReference type="CDD" id="cd24133">
    <property type="entry name" value="ASKHA_NBD_TsaD_bac"/>
    <property type="match status" value="1"/>
</dbReference>
<dbReference type="FunFam" id="3.30.420.40:FF:000012">
    <property type="entry name" value="tRNA N6-adenosine threonylcarbamoyltransferase"/>
    <property type="match status" value="1"/>
</dbReference>
<dbReference type="FunFam" id="3.30.420.40:FF:000040">
    <property type="entry name" value="tRNA N6-adenosine threonylcarbamoyltransferase"/>
    <property type="match status" value="1"/>
</dbReference>
<dbReference type="Gene3D" id="3.30.420.40">
    <property type="match status" value="2"/>
</dbReference>
<dbReference type="HAMAP" id="MF_01445">
    <property type="entry name" value="TsaD"/>
    <property type="match status" value="1"/>
</dbReference>
<dbReference type="InterPro" id="IPR043129">
    <property type="entry name" value="ATPase_NBD"/>
</dbReference>
<dbReference type="InterPro" id="IPR000905">
    <property type="entry name" value="Gcp-like_dom"/>
</dbReference>
<dbReference type="InterPro" id="IPR017861">
    <property type="entry name" value="KAE1/TsaD"/>
</dbReference>
<dbReference type="InterPro" id="IPR017860">
    <property type="entry name" value="Peptidase_M22_CS"/>
</dbReference>
<dbReference type="InterPro" id="IPR022450">
    <property type="entry name" value="TsaD"/>
</dbReference>
<dbReference type="NCBIfam" id="TIGR00329">
    <property type="entry name" value="gcp_kae1"/>
    <property type="match status" value="1"/>
</dbReference>
<dbReference type="NCBIfam" id="TIGR03723">
    <property type="entry name" value="T6A_TsaD_YgjD"/>
    <property type="match status" value="1"/>
</dbReference>
<dbReference type="PANTHER" id="PTHR11735">
    <property type="entry name" value="TRNA N6-ADENOSINE THREONYLCARBAMOYLTRANSFERASE"/>
    <property type="match status" value="1"/>
</dbReference>
<dbReference type="PANTHER" id="PTHR11735:SF6">
    <property type="entry name" value="TRNA N6-ADENOSINE THREONYLCARBAMOYLTRANSFERASE, MITOCHONDRIAL"/>
    <property type="match status" value="1"/>
</dbReference>
<dbReference type="Pfam" id="PF00814">
    <property type="entry name" value="TsaD"/>
    <property type="match status" value="1"/>
</dbReference>
<dbReference type="PRINTS" id="PR00789">
    <property type="entry name" value="OSIALOPTASE"/>
</dbReference>
<dbReference type="SUPFAM" id="SSF53067">
    <property type="entry name" value="Actin-like ATPase domain"/>
    <property type="match status" value="2"/>
</dbReference>
<dbReference type="PROSITE" id="PS01016">
    <property type="entry name" value="GLYCOPROTEASE"/>
    <property type="match status" value="1"/>
</dbReference>
<reference key="1">
    <citation type="journal article" date="2001" name="Lancet">
        <title>Whole genome sequencing of meticillin-resistant Staphylococcus aureus.</title>
        <authorList>
            <person name="Kuroda M."/>
            <person name="Ohta T."/>
            <person name="Uchiyama I."/>
            <person name="Baba T."/>
            <person name="Yuzawa H."/>
            <person name="Kobayashi I."/>
            <person name="Cui L."/>
            <person name="Oguchi A."/>
            <person name="Aoki K."/>
            <person name="Nagai Y."/>
            <person name="Lian J.-Q."/>
            <person name="Ito T."/>
            <person name="Kanamori M."/>
            <person name="Matsumaru H."/>
            <person name="Maruyama A."/>
            <person name="Murakami H."/>
            <person name="Hosoyama A."/>
            <person name="Mizutani-Ui Y."/>
            <person name="Takahashi N.K."/>
            <person name="Sawano T."/>
            <person name="Inoue R."/>
            <person name="Kaito C."/>
            <person name="Sekimizu K."/>
            <person name="Hirakawa H."/>
            <person name="Kuhara S."/>
            <person name="Goto S."/>
            <person name="Yabuzaki J."/>
            <person name="Kanehisa M."/>
            <person name="Yamashita A."/>
            <person name="Oshima K."/>
            <person name="Furuya K."/>
            <person name="Yoshino C."/>
            <person name="Shiba T."/>
            <person name="Hattori M."/>
            <person name="Ogasawara N."/>
            <person name="Hayashi H."/>
            <person name="Hiramatsu K."/>
        </authorList>
    </citation>
    <scope>NUCLEOTIDE SEQUENCE [LARGE SCALE GENOMIC DNA]</scope>
    <source>
        <strain>N315</strain>
    </source>
</reference>
<reference key="2">
    <citation type="submission" date="2007-10" db="UniProtKB">
        <title>Shotgun proteomic analysis of total and membrane protein extracts of S. aureus strain N315.</title>
        <authorList>
            <person name="Vaezzadeh A.R."/>
            <person name="Deshusses J."/>
            <person name="Lescuyer P."/>
            <person name="Hochstrasser D.F."/>
        </authorList>
    </citation>
    <scope>IDENTIFICATION BY MASS SPECTROMETRY [LARGE SCALE ANALYSIS]</scope>
    <source>
        <strain>N315</strain>
    </source>
</reference>
<protein>
    <recommendedName>
        <fullName evidence="1">tRNA N6-adenosine threonylcarbamoyltransferase</fullName>
        <ecNumber evidence="1">2.3.1.234</ecNumber>
    </recommendedName>
    <alternativeName>
        <fullName evidence="1">N6-L-threonylcarbamoyladenine synthase</fullName>
        <shortName evidence="1">t(6)A synthase</shortName>
    </alternativeName>
    <alternativeName>
        <fullName evidence="1">t(6)A37 threonylcarbamoyladenosine biosynthesis protein TsaD</fullName>
    </alternativeName>
    <alternativeName>
        <fullName evidence="1">tRNA threonylcarbamoyladenosine biosynthesis protein TsaD</fullName>
    </alternativeName>
</protein>
<comment type="function">
    <text evidence="1">Required for the formation of a threonylcarbamoyl group on adenosine at position 37 (t(6)A37) in tRNAs that read codons beginning with adenine. Is involved in the transfer of the threonylcarbamoyl moiety of threonylcarbamoyl-AMP (TC-AMP) to the N6 group of A37, together with TsaE and TsaB. TsaD likely plays a direct catalytic role in this reaction.</text>
</comment>
<comment type="catalytic activity">
    <reaction evidence="1">
        <text>L-threonylcarbamoyladenylate + adenosine(37) in tRNA = N(6)-L-threonylcarbamoyladenosine(37) in tRNA + AMP + H(+)</text>
        <dbReference type="Rhea" id="RHEA:37059"/>
        <dbReference type="Rhea" id="RHEA-COMP:10162"/>
        <dbReference type="Rhea" id="RHEA-COMP:10163"/>
        <dbReference type="ChEBI" id="CHEBI:15378"/>
        <dbReference type="ChEBI" id="CHEBI:73682"/>
        <dbReference type="ChEBI" id="CHEBI:74411"/>
        <dbReference type="ChEBI" id="CHEBI:74418"/>
        <dbReference type="ChEBI" id="CHEBI:456215"/>
        <dbReference type="EC" id="2.3.1.234"/>
    </reaction>
</comment>
<comment type="cofactor">
    <cofactor evidence="1">
        <name>Fe(2+)</name>
        <dbReference type="ChEBI" id="CHEBI:29033"/>
    </cofactor>
    <text evidence="1">Binds 1 Fe(2+) ion per subunit.</text>
</comment>
<comment type="subcellular location">
    <subcellularLocation>
        <location evidence="1">Cytoplasm</location>
    </subcellularLocation>
</comment>
<comment type="similarity">
    <text evidence="1">Belongs to the KAE1 / TsaD family.</text>
</comment>
<gene>
    <name evidence="1" type="primary">tsaD</name>
    <name type="synonym">gcp</name>
    <name type="ordered locus">SA1854</name>
</gene>
<proteinExistence type="evidence at protein level"/>
<accession>Q7A4H8</accession>
<feature type="chain" id="PRO_0000303550" description="tRNA N6-adenosine threonylcarbamoyltransferase">
    <location>
        <begin position="1"/>
        <end position="341"/>
    </location>
</feature>
<feature type="binding site" evidence="1">
    <location>
        <position position="115"/>
    </location>
    <ligand>
        <name>Fe cation</name>
        <dbReference type="ChEBI" id="CHEBI:24875"/>
    </ligand>
</feature>
<feature type="binding site" evidence="1">
    <location>
        <position position="119"/>
    </location>
    <ligand>
        <name>Fe cation</name>
        <dbReference type="ChEBI" id="CHEBI:24875"/>
    </ligand>
</feature>
<feature type="binding site" evidence="1">
    <location>
        <begin position="137"/>
        <end position="141"/>
    </location>
    <ligand>
        <name>substrate</name>
    </ligand>
</feature>
<feature type="binding site" evidence="1">
    <location>
        <position position="170"/>
    </location>
    <ligand>
        <name>substrate</name>
    </ligand>
</feature>
<feature type="binding site" evidence="1">
    <location>
        <position position="183"/>
    </location>
    <ligand>
        <name>substrate</name>
    </ligand>
</feature>
<feature type="binding site" evidence="1">
    <location>
        <position position="187"/>
    </location>
    <ligand>
        <name>substrate</name>
    </ligand>
</feature>
<feature type="binding site" evidence="1">
    <location>
        <position position="276"/>
    </location>
    <ligand>
        <name>substrate</name>
    </ligand>
</feature>
<feature type="binding site" evidence="1">
    <location>
        <position position="304"/>
    </location>
    <ligand>
        <name>Fe cation</name>
        <dbReference type="ChEBI" id="CHEBI:24875"/>
    </ligand>
</feature>
<evidence type="ECO:0000255" key="1">
    <source>
        <dbReference type="HAMAP-Rule" id="MF_01445"/>
    </source>
</evidence>